<feature type="chain" id="PRO_0000311691" description="Golgi-associated RAB2 interactor protein 1B">
    <location>
        <begin position="1"/>
        <end position="344"/>
    </location>
</feature>
<feature type="region of interest" description="Disordered" evidence="2">
    <location>
        <begin position="271"/>
        <end position="293"/>
    </location>
</feature>
<feature type="splice variant" id="VSP_055270" description="In isoform 3." evidence="3">
    <original>MLSSFPHRKTWRKSKKTVKVTRSYPTFPSLNAWEEFRGLLPVDGEPNPGAGLGVEEGLLCRVVHSP</original>
    <variation>MELDGQKGQELERRLQSFQHHGPGGDLLGTLPAPPQHPTHGQCQMAPGAEPDMEQTIHSPQHLPEE</variation>
    <location>
        <begin position="1"/>
        <end position="66"/>
    </location>
</feature>
<feature type="splice variant" id="VSP_055271" description="In isoform 3." evidence="3">
    <location>
        <begin position="67"/>
        <end position="165"/>
    </location>
</feature>
<feature type="splice variant" id="VSP_029580" description="In isoform 2 and isoform 3." evidence="3 4">
    <location>
        <begin position="270"/>
        <end position="271"/>
    </location>
</feature>
<feature type="sequence variant" id="VAR_037271" description="In dbSNP:rs6949056.">
    <original>S</original>
    <variation>L</variation>
    <location>
        <position position="228"/>
    </location>
</feature>
<feature type="sequence variant" id="VAR_037272" description="In dbSNP:rs6971091.">
    <original>E</original>
    <variation>K</variation>
    <location>
        <position position="242"/>
    </location>
</feature>
<dbReference type="EMBL" id="AF367470">
    <property type="protein sequence ID" value="AAK53406.1"/>
    <property type="molecule type" value="mRNA"/>
</dbReference>
<dbReference type="EMBL" id="AK093161">
    <property type="protein sequence ID" value="BAC04080.1"/>
    <property type="molecule type" value="mRNA"/>
</dbReference>
<dbReference type="EMBL" id="AC018638">
    <property type="status" value="NOT_ANNOTATED_CDS"/>
    <property type="molecule type" value="Genomic_DNA"/>
</dbReference>
<dbReference type="EMBL" id="AC024952">
    <property type="status" value="NOT_ANNOTATED_CDS"/>
    <property type="molecule type" value="Genomic_DNA"/>
</dbReference>
<dbReference type="EMBL" id="CH471070">
    <property type="protein sequence ID" value="EAW83668.1"/>
    <property type="molecule type" value="Genomic_DNA"/>
</dbReference>
<dbReference type="EMBL" id="CH471070">
    <property type="protein sequence ID" value="EAW83670.1"/>
    <property type="molecule type" value="Genomic_DNA"/>
</dbReference>
<dbReference type="EMBL" id="CH471070">
    <property type="protein sequence ID" value="EAW83672.1"/>
    <property type="molecule type" value="Genomic_DNA"/>
</dbReference>
<dbReference type="EMBL" id="BC037248">
    <property type="protein sequence ID" value="AAH37248.1"/>
    <property type="molecule type" value="mRNA"/>
</dbReference>
<dbReference type="CCDS" id="CCDS5804.1">
    <molecule id="Q96KD3-1"/>
</dbReference>
<dbReference type="CCDS" id="CCDS64763.1">
    <molecule id="Q96KD3-3"/>
</dbReference>
<dbReference type="CCDS" id="CCDS94192.1">
    <molecule id="Q96KD3-2"/>
</dbReference>
<dbReference type="RefSeq" id="NP_001269717.1">
    <molecule id="Q96KD3-2"/>
    <property type="nucleotide sequence ID" value="NM_001282788.3"/>
</dbReference>
<dbReference type="RefSeq" id="NP_001269718.1">
    <molecule id="Q96KD3-3"/>
    <property type="nucleotide sequence ID" value="NM_001282789.2"/>
</dbReference>
<dbReference type="RefSeq" id="NP_115988.1">
    <molecule id="Q96KD3-1"/>
    <property type="nucleotide sequence ID" value="NM_032599.4"/>
</dbReference>
<dbReference type="BioGRID" id="124206">
    <property type="interactions" value="14"/>
</dbReference>
<dbReference type="FunCoup" id="Q96KD3">
    <property type="interactions" value="88"/>
</dbReference>
<dbReference type="IntAct" id="Q96KD3">
    <property type="interactions" value="3"/>
</dbReference>
<dbReference type="STRING" id="9606.ENSP00000326652"/>
<dbReference type="iPTMnet" id="Q96KD3"/>
<dbReference type="PhosphoSitePlus" id="Q96KD3"/>
<dbReference type="BioMuta" id="FAM71F1"/>
<dbReference type="DMDM" id="74716898"/>
<dbReference type="MassIVE" id="Q96KD3"/>
<dbReference type="PaxDb" id="9606-ENSP00000326652"/>
<dbReference type="PeptideAtlas" id="Q96KD3"/>
<dbReference type="ProteomicsDB" id="72637"/>
<dbReference type="Antibodypedia" id="17801">
    <property type="antibodies" value="36 antibodies from 10 providers"/>
</dbReference>
<dbReference type="DNASU" id="84691"/>
<dbReference type="Ensembl" id="ENST00000315184.9">
    <molecule id="Q96KD3-1"/>
    <property type="protein sequence ID" value="ENSP00000326652.4"/>
    <property type="gene ID" value="ENSG00000135248.16"/>
</dbReference>
<dbReference type="Ensembl" id="ENST00000485070.5">
    <molecule id="Q96KD3-3"/>
    <property type="protein sequence ID" value="ENSP00000418192.1"/>
    <property type="gene ID" value="ENSG00000135248.16"/>
</dbReference>
<dbReference type="Ensembl" id="ENST00000621392.5">
    <molecule id="Q96KD3-2"/>
    <property type="protein sequence ID" value="ENSP00000477573.2"/>
    <property type="gene ID" value="ENSG00000135248.16"/>
</dbReference>
<dbReference type="GeneID" id="84691"/>
<dbReference type="KEGG" id="hsa:84691"/>
<dbReference type="MANE-Select" id="ENST00000621392.5">
    <molecule id="Q96KD3-2"/>
    <property type="protein sequence ID" value="ENSP00000477573.2"/>
    <property type="RefSeq nucleotide sequence ID" value="NM_001282788.3"/>
    <property type="RefSeq protein sequence ID" value="NP_001269717.1"/>
</dbReference>
<dbReference type="UCSC" id="uc003vnn.2">
    <molecule id="Q96KD3-1"/>
    <property type="organism name" value="human"/>
</dbReference>
<dbReference type="AGR" id="HGNC:30704"/>
<dbReference type="CTD" id="84691"/>
<dbReference type="DisGeNET" id="84691"/>
<dbReference type="GeneCards" id="GARIN1B"/>
<dbReference type="HGNC" id="HGNC:30704">
    <property type="gene designation" value="GARIN1B"/>
</dbReference>
<dbReference type="HPA" id="ENSG00000135248">
    <property type="expression patterns" value="Tissue enriched (testis)"/>
</dbReference>
<dbReference type="MIM" id="619905">
    <property type="type" value="gene"/>
</dbReference>
<dbReference type="neXtProt" id="NX_Q96KD3"/>
<dbReference type="OpenTargets" id="ENSG00000135248"/>
<dbReference type="VEuPathDB" id="HostDB:ENSG00000135248"/>
<dbReference type="eggNOG" id="ENOG502S7XV">
    <property type="taxonomic scope" value="Eukaryota"/>
</dbReference>
<dbReference type="GeneTree" id="ENSGT00940000161477"/>
<dbReference type="HOGENOM" id="CLU_1142281_0_0_1"/>
<dbReference type="InParanoid" id="Q96KD3"/>
<dbReference type="OMA" id="VCDHLQR"/>
<dbReference type="OrthoDB" id="9826157at2759"/>
<dbReference type="PAN-GO" id="Q96KD3">
    <property type="GO annotations" value="0 GO annotations based on evolutionary models"/>
</dbReference>
<dbReference type="PhylomeDB" id="Q96KD3"/>
<dbReference type="TreeFam" id="TF336050"/>
<dbReference type="PathwayCommons" id="Q96KD3"/>
<dbReference type="SignaLink" id="Q96KD3"/>
<dbReference type="BioGRID-ORCS" id="84691">
    <property type="hits" value="6 hits in 1137 CRISPR screens"/>
</dbReference>
<dbReference type="GenomeRNAi" id="84691"/>
<dbReference type="Pharos" id="Q96KD3">
    <property type="development level" value="Tdark"/>
</dbReference>
<dbReference type="PRO" id="PR:Q96KD3"/>
<dbReference type="Proteomes" id="UP000005640">
    <property type="component" value="Chromosome 7"/>
</dbReference>
<dbReference type="RNAct" id="Q96KD3">
    <property type="molecule type" value="protein"/>
</dbReference>
<dbReference type="Bgee" id="ENSG00000135248">
    <property type="expression patterns" value="Expressed in sperm and 102 other cell types or tissues"/>
</dbReference>
<dbReference type="ExpressionAtlas" id="Q96KD3">
    <property type="expression patterns" value="baseline and differential"/>
</dbReference>
<dbReference type="GO" id="GO:0005794">
    <property type="term" value="C:Golgi apparatus"/>
    <property type="evidence" value="ECO:0000250"/>
    <property type="project" value="UniProtKB"/>
</dbReference>
<dbReference type="GO" id="GO:0001675">
    <property type="term" value="P:acrosome assembly"/>
    <property type="evidence" value="ECO:0000250"/>
    <property type="project" value="UniProtKB"/>
</dbReference>
<dbReference type="GO" id="GO:0007340">
    <property type="term" value="P:acrosome reaction"/>
    <property type="evidence" value="ECO:0000250"/>
    <property type="project" value="UniProtKB"/>
</dbReference>
<dbReference type="InterPro" id="IPR022168">
    <property type="entry name" value="GARIL-like_Rab2B-bd"/>
</dbReference>
<dbReference type="PANTHER" id="PTHR22574">
    <property type="match status" value="1"/>
</dbReference>
<dbReference type="PANTHER" id="PTHR22574:SF13">
    <property type="entry name" value="GOLGI-ASSOCIATED RAB2 INTERACTOR PROTEIN 1B"/>
    <property type="match status" value="1"/>
</dbReference>
<dbReference type="Pfam" id="PF12480">
    <property type="entry name" value="GARIL_Rab2_bd"/>
    <property type="match status" value="1"/>
</dbReference>
<keyword id="KW-0025">Alternative splicing</keyword>
<keyword id="KW-0333">Golgi apparatus</keyword>
<keyword id="KW-1185">Reference proteome</keyword>
<comment type="function">
    <text evidence="1">RAB2B effector protein required for accurate acrosome formation and normal male fertility. In complex with RAB2A/RAB2B, seems to suppress excessive vesicle trafficking during acrosome formation.</text>
</comment>
<comment type="interaction">
    <interactant intactId="EBI-6448805">
        <id>Q96KD3-2</id>
    </interactant>
    <interactant intactId="EBI-1216080">
        <id>Q9Y250</id>
        <label>LZTS1</label>
    </interactant>
    <organismsDiffer>false</organismsDiffer>
    <experiments>3</experiments>
</comment>
<comment type="subcellular location">
    <subcellularLocation>
        <location evidence="1">Golgi apparatus</location>
    </subcellularLocation>
</comment>
<comment type="alternative products">
    <event type="alternative splicing"/>
    <isoform>
        <id>Q96KD3-1</id>
        <name>1</name>
        <sequence type="displayed"/>
    </isoform>
    <isoform>
        <id>Q96KD3-2</id>
        <name>2</name>
        <sequence type="described" ref="VSP_029580"/>
    </isoform>
    <isoform>
        <id>Q96KD3-3</id>
        <name>3</name>
        <sequence type="described" ref="VSP_055270 VSP_055271 VSP_029580"/>
    </isoform>
</comment>
<comment type="similarity">
    <text evidence="5">Belongs to the GARIN family.</text>
</comment>
<organism>
    <name type="scientific">Homo sapiens</name>
    <name type="common">Human</name>
    <dbReference type="NCBI Taxonomy" id="9606"/>
    <lineage>
        <taxon>Eukaryota</taxon>
        <taxon>Metazoa</taxon>
        <taxon>Chordata</taxon>
        <taxon>Craniata</taxon>
        <taxon>Vertebrata</taxon>
        <taxon>Euteleostomi</taxon>
        <taxon>Mammalia</taxon>
        <taxon>Eutheria</taxon>
        <taxon>Euarchontoglires</taxon>
        <taxon>Primates</taxon>
        <taxon>Haplorrhini</taxon>
        <taxon>Catarrhini</taxon>
        <taxon>Hominidae</taxon>
        <taxon>Homo</taxon>
    </lineage>
</organism>
<accession>Q96KD3</accession>
<accession>Q8IY75</accession>
<accession>Q8NA48</accession>
<evidence type="ECO:0000250" key="1">
    <source>
        <dbReference type="UniProtKB" id="Q3UZD7"/>
    </source>
</evidence>
<evidence type="ECO:0000256" key="2">
    <source>
        <dbReference type="SAM" id="MobiDB-lite"/>
    </source>
</evidence>
<evidence type="ECO:0000303" key="3">
    <source>
    </source>
</evidence>
<evidence type="ECO:0000303" key="4">
    <source>
    </source>
</evidence>
<evidence type="ECO:0000305" key="5"/>
<evidence type="ECO:0000312" key="6">
    <source>
        <dbReference type="HGNC" id="HGNC:30704"/>
    </source>
</evidence>
<gene>
    <name evidence="6" type="primary">GARIN1B</name>
    <name type="synonym">FAM137A</name>
    <name type="synonym">FAM71F1</name>
</gene>
<protein>
    <recommendedName>
        <fullName evidence="5">Golgi-associated RAB2 interactor protein 1B</fullName>
    </recommendedName>
    <alternativeName>
        <fullName>Testis development protein NYD-SP18</fullName>
    </alternativeName>
</protein>
<reference key="1">
    <citation type="submission" date="2001-04" db="EMBL/GenBank/DDBJ databases">
        <title>A new testis development gene NYD-SP18 from human testes.</title>
        <authorList>
            <person name="Sha J.H."/>
            <person name="Li J.M."/>
            <person name="Zhou Z.M."/>
        </authorList>
    </citation>
    <scope>NUCLEOTIDE SEQUENCE [MRNA] (ISOFORM 1)</scope>
    <source>
        <tissue>Testis</tissue>
    </source>
</reference>
<reference key="2">
    <citation type="journal article" date="2004" name="Nat. Genet.">
        <title>Complete sequencing and characterization of 21,243 full-length human cDNAs.</title>
        <authorList>
            <person name="Ota T."/>
            <person name="Suzuki Y."/>
            <person name="Nishikawa T."/>
            <person name="Otsuki T."/>
            <person name="Sugiyama T."/>
            <person name="Irie R."/>
            <person name="Wakamatsu A."/>
            <person name="Hayashi K."/>
            <person name="Sato H."/>
            <person name="Nagai K."/>
            <person name="Kimura K."/>
            <person name="Makita H."/>
            <person name="Sekine M."/>
            <person name="Obayashi M."/>
            <person name="Nishi T."/>
            <person name="Shibahara T."/>
            <person name="Tanaka T."/>
            <person name="Ishii S."/>
            <person name="Yamamoto J."/>
            <person name="Saito K."/>
            <person name="Kawai Y."/>
            <person name="Isono Y."/>
            <person name="Nakamura Y."/>
            <person name="Nagahari K."/>
            <person name="Murakami K."/>
            <person name="Yasuda T."/>
            <person name="Iwayanagi T."/>
            <person name="Wagatsuma M."/>
            <person name="Shiratori A."/>
            <person name="Sudo H."/>
            <person name="Hosoiri T."/>
            <person name="Kaku Y."/>
            <person name="Kodaira H."/>
            <person name="Kondo H."/>
            <person name="Sugawara M."/>
            <person name="Takahashi M."/>
            <person name="Kanda K."/>
            <person name="Yokoi T."/>
            <person name="Furuya T."/>
            <person name="Kikkawa E."/>
            <person name="Omura Y."/>
            <person name="Abe K."/>
            <person name="Kamihara K."/>
            <person name="Katsuta N."/>
            <person name="Sato K."/>
            <person name="Tanikawa M."/>
            <person name="Yamazaki M."/>
            <person name="Ninomiya K."/>
            <person name="Ishibashi T."/>
            <person name="Yamashita H."/>
            <person name="Murakawa K."/>
            <person name="Fujimori K."/>
            <person name="Tanai H."/>
            <person name="Kimata M."/>
            <person name="Watanabe M."/>
            <person name="Hiraoka S."/>
            <person name="Chiba Y."/>
            <person name="Ishida S."/>
            <person name="Ono Y."/>
            <person name="Takiguchi S."/>
            <person name="Watanabe S."/>
            <person name="Yosida M."/>
            <person name="Hotuta T."/>
            <person name="Kusano J."/>
            <person name="Kanehori K."/>
            <person name="Takahashi-Fujii A."/>
            <person name="Hara H."/>
            <person name="Tanase T.-O."/>
            <person name="Nomura Y."/>
            <person name="Togiya S."/>
            <person name="Komai F."/>
            <person name="Hara R."/>
            <person name="Takeuchi K."/>
            <person name="Arita M."/>
            <person name="Imose N."/>
            <person name="Musashino K."/>
            <person name="Yuuki H."/>
            <person name="Oshima A."/>
            <person name="Sasaki N."/>
            <person name="Aotsuka S."/>
            <person name="Yoshikawa Y."/>
            <person name="Matsunawa H."/>
            <person name="Ichihara T."/>
            <person name="Shiohata N."/>
            <person name="Sano S."/>
            <person name="Moriya S."/>
            <person name="Momiyama H."/>
            <person name="Satoh N."/>
            <person name="Takami S."/>
            <person name="Terashima Y."/>
            <person name="Suzuki O."/>
            <person name="Nakagawa S."/>
            <person name="Senoh A."/>
            <person name="Mizoguchi H."/>
            <person name="Goto Y."/>
            <person name="Shimizu F."/>
            <person name="Wakebe H."/>
            <person name="Hishigaki H."/>
            <person name="Watanabe T."/>
            <person name="Sugiyama A."/>
            <person name="Takemoto M."/>
            <person name="Kawakami B."/>
            <person name="Yamazaki M."/>
            <person name="Watanabe K."/>
            <person name="Kumagai A."/>
            <person name="Itakura S."/>
            <person name="Fukuzumi Y."/>
            <person name="Fujimori Y."/>
            <person name="Komiyama M."/>
            <person name="Tashiro H."/>
            <person name="Tanigami A."/>
            <person name="Fujiwara T."/>
            <person name="Ono T."/>
            <person name="Yamada K."/>
            <person name="Fujii Y."/>
            <person name="Ozaki K."/>
            <person name="Hirao M."/>
            <person name="Ohmori Y."/>
            <person name="Kawabata A."/>
            <person name="Hikiji T."/>
            <person name="Kobatake N."/>
            <person name="Inagaki H."/>
            <person name="Ikema Y."/>
            <person name="Okamoto S."/>
            <person name="Okitani R."/>
            <person name="Kawakami T."/>
            <person name="Noguchi S."/>
            <person name="Itoh T."/>
            <person name="Shigeta K."/>
            <person name="Senba T."/>
            <person name="Matsumura K."/>
            <person name="Nakajima Y."/>
            <person name="Mizuno T."/>
            <person name="Morinaga M."/>
            <person name="Sasaki M."/>
            <person name="Togashi T."/>
            <person name="Oyama M."/>
            <person name="Hata H."/>
            <person name="Watanabe M."/>
            <person name="Komatsu T."/>
            <person name="Mizushima-Sugano J."/>
            <person name="Satoh T."/>
            <person name="Shirai Y."/>
            <person name="Takahashi Y."/>
            <person name="Nakagawa K."/>
            <person name="Okumura K."/>
            <person name="Nagase T."/>
            <person name="Nomura N."/>
            <person name="Kikuchi H."/>
            <person name="Masuho Y."/>
            <person name="Yamashita R."/>
            <person name="Nakai K."/>
            <person name="Yada T."/>
            <person name="Nakamura Y."/>
            <person name="Ohara O."/>
            <person name="Isogai T."/>
            <person name="Sugano S."/>
        </authorList>
    </citation>
    <scope>NUCLEOTIDE SEQUENCE [LARGE SCALE MRNA] (ISOFORM 3)</scope>
    <source>
        <tissue>Testis</tissue>
    </source>
</reference>
<reference key="3">
    <citation type="journal article" date="2003" name="Nature">
        <title>The DNA sequence of human chromosome 7.</title>
        <authorList>
            <person name="Hillier L.W."/>
            <person name="Fulton R.S."/>
            <person name="Fulton L.A."/>
            <person name="Graves T.A."/>
            <person name="Pepin K.H."/>
            <person name="Wagner-McPherson C."/>
            <person name="Layman D."/>
            <person name="Maas J."/>
            <person name="Jaeger S."/>
            <person name="Walker R."/>
            <person name="Wylie K."/>
            <person name="Sekhon M."/>
            <person name="Becker M.C."/>
            <person name="O'Laughlin M.D."/>
            <person name="Schaller M.E."/>
            <person name="Fewell G.A."/>
            <person name="Delehaunty K.D."/>
            <person name="Miner T.L."/>
            <person name="Nash W.E."/>
            <person name="Cordes M."/>
            <person name="Du H."/>
            <person name="Sun H."/>
            <person name="Edwards J."/>
            <person name="Bradshaw-Cordum H."/>
            <person name="Ali J."/>
            <person name="Andrews S."/>
            <person name="Isak A."/>
            <person name="Vanbrunt A."/>
            <person name="Nguyen C."/>
            <person name="Du F."/>
            <person name="Lamar B."/>
            <person name="Courtney L."/>
            <person name="Kalicki J."/>
            <person name="Ozersky P."/>
            <person name="Bielicki L."/>
            <person name="Scott K."/>
            <person name="Holmes A."/>
            <person name="Harkins R."/>
            <person name="Harris A."/>
            <person name="Strong C.M."/>
            <person name="Hou S."/>
            <person name="Tomlinson C."/>
            <person name="Dauphin-Kohlberg S."/>
            <person name="Kozlowicz-Reilly A."/>
            <person name="Leonard S."/>
            <person name="Rohlfing T."/>
            <person name="Rock S.M."/>
            <person name="Tin-Wollam A.-M."/>
            <person name="Abbott A."/>
            <person name="Minx P."/>
            <person name="Maupin R."/>
            <person name="Strowmatt C."/>
            <person name="Latreille P."/>
            <person name="Miller N."/>
            <person name="Johnson D."/>
            <person name="Murray J."/>
            <person name="Woessner J.P."/>
            <person name="Wendl M.C."/>
            <person name="Yang S.-P."/>
            <person name="Schultz B.R."/>
            <person name="Wallis J.W."/>
            <person name="Spieth J."/>
            <person name="Bieri T.A."/>
            <person name="Nelson J.O."/>
            <person name="Berkowicz N."/>
            <person name="Wohldmann P.E."/>
            <person name="Cook L.L."/>
            <person name="Hickenbotham M.T."/>
            <person name="Eldred J."/>
            <person name="Williams D."/>
            <person name="Bedell J.A."/>
            <person name="Mardis E.R."/>
            <person name="Clifton S.W."/>
            <person name="Chissoe S.L."/>
            <person name="Marra M.A."/>
            <person name="Raymond C."/>
            <person name="Haugen E."/>
            <person name="Gillett W."/>
            <person name="Zhou Y."/>
            <person name="James R."/>
            <person name="Phelps K."/>
            <person name="Iadanoto S."/>
            <person name="Bubb K."/>
            <person name="Simms E."/>
            <person name="Levy R."/>
            <person name="Clendenning J."/>
            <person name="Kaul R."/>
            <person name="Kent W.J."/>
            <person name="Furey T.S."/>
            <person name="Baertsch R.A."/>
            <person name="Brent M.R."/>
            <person name="Keibler E."/>
            <person name="Flicek P."/>
            <person name="Bork P."/>
            <person name="Suyama M."/>
            <person name="Bailey J.A."/>
            <person name="Portnoy M.E."/>
            <person name="Torrents D."/>
            <person name="Chinwalla A.T."/>
            <person name="Gish W.R."/>
            <person name="Eddy S.R."/>
            <person name="McPherson J.D."/>
            <person name="Olson M.V."/>
            <person name="Eichler E.E."/>
            <person name="Green E.D."/>
            <person name="Waterston R.H."/>
            <person name="Wilson R.K."/>
        </authorList>
    </citation>
    <scope>NUCLEOTIDE SEQUENCE [LARGE SCALE GENOMIC DNA]</scope>
</reference>
<reference key="4">
    <citation type="submission" date="2005-07" db="EMBL/GenBank/DDBJ databases">
        <authorList>
            <person name="Mural R.J."/>
            <person name="Istrail S."/>
            <person name="Sutton G.G."/>
            <person name="Florea L."/>
            <person name="Halpern A.L."/>
            <person name="Mobarry C.M."/>
            <person name="Lippert R."/>
            <person name="Walenz B."/>
            <person name="Shatkay H."/>
            <person name="Dew I."/>
            <person name="Miller J.R."/>
            <person name="Flanigan M.J."/>
            <person name="Edwards N.J."/>
            <person name="Bolanos R."/>
            <person name="Fasulo D."/>
            <person name="Halldorsson B.V."/>
            <person name="Hannenhalli S."/>
            <person name="Turner R."/>
            <person name="Yooseph S."/>
            <person name="Lu F."/>
            <person name="Nusskern D.R."/>
            <person name="Shue B.C."/>
            <person name="Zheng X.H."/>
            <person name="Zhong F."/>
            <person name="Delcher A.L."/>
            <person name="Huson D.H."/>
            <person name="Kravitz S.A."/>
            <person name="Mouchard L."/>
            <person name="Reinert K."/>
            <person name="Remington K.A."/>
            <person name="Clark A.G."/>
            <person name="Waterman M.S."/>
            <person name="Eichler E.E."/>
            <person name="Adams M.D."/>
            <person name="Hunkapiller M.W."/>
            <person name="Myers E.W."/>
            <person name="Venter J.C."/>
        </authorList>
    </citation>
    <scope>NUCLEOTIDE SEQUENCE [LARGE SCALE GENOMIC DNA]</scope>
</reference>
<reference key="5">
    <citation type="journal article" date="2004" name="Genome Res.">
        <title>The status, quality, and expansion of the NIH full-length cDNA project: the Mammalian Gene Collection (MGC).</title>
        <authorList>
            <consortium name="The MGC Project Team"/>
        </authorList>
    </citation>
    <scope>NUCLEOTIDE SEQUENCE [LARGE SCALE MRNA] (ISOFORM 2)</scope>
    <source>
        <tissue>Brain</tissue>
    </source>
</reference>
<proteinExistence type="evidence at protein level"/>
<name>GAR1B_HUMAN</name>
<sequence>MLSSFPHRKTWRKSKKTVKVTRSYPTFPSLNAWEEFRGLLPVDGEPNPGAGLGVEEGLLCRVVHSPEFNLFLDSVVFESNFIQVKRGRNWRDVYKASNTMALGVTSSVPCLPLPNILLMASVKWHQGQNQTWNRPSIAPNIFLKRILPLRFVELQVCDHYQRILQLRTVTEKIYYLKLHPDHPETVFHFWIRLVQILQKGLSITTKDPRILVTHCLVPKNCSSPSGDSKLVQKKLQASQPSESLIQLMTKGESEALSQIFADLHQQNQLSFRSSRKVETNKNSSGKDSSREDSIPCTCDLRWRASFTYGEWERENPSGLQPLSLLSTLAASTGPQLAPPIGNSI</sequence>